<gene>
    <name evidence="1" type="primary">udk</name>
    <name type="ordered locus">UUR10_0339</name>
</gene>
<name>URK_UREU1</name>
<reference key="1">
    <citation type="submission" date="2008-10" db="EMBL/GenBank/DDBJ databases">
        <title>Genome sequence of Ureaplasma urealyticum serovar 10 ATCC-33699.</title>
        <authorList>
            <person name="Shrivastava S."/>
            <person name="Methe B.A."/>
            <person name="Glass J."/>
            <person name="White K."/>
            <person name="Duffy L.B."/>
        </authorList>
    </citation>
    <scope>NUCLEOTIDE SEQUENCE [LARGE SCALE GENOMIC DNA]</scope>
    <source>
        <strain>ATCC 33699 / Western</strain>
    </source>
</reference>
<protein>
    <recommendedName>
        <fullName evidence="1">Uridine kinase</fullName>
        <ecNumber evidence="1">2.7.1.48</ecNumber>
    </recommendedName>
    <alternativeName>
        <fullName evidence="1">Cytidine monophosphokinase</fullName>
    </alternativeName>
    <alternativeName>
        <fullName evidence="1">Uridine monophosphokinase</fullName>
    </alternativeName>
</protein>
<accession>B5ZBE2</accession>
<proteinExistence type="inferred from homology"/>
<organism>
    <name type="scientific">Ureaplasma urealyticum serovar 10 (strain ATCC 33699 / Western)</name>
    <dbReference type="NCBI Taxonomy" id="565575"/>
    <lineage>
        <taxon>Bacteria</taxon>
        <taxon>Bacillati</taxon>
        <taxon>Mycoplasmatota</taxon>
        <taxon>Mycoplasmoidales</taxon>
        <taxon>Mycoplasmoidaceae</taxon>
        <taxon>Ureaplasma</taxon>
    </lineage>
</organism>
<dbReference type="EC" id="2.7.1.48" evidence="1"/>
<dbReference type="EMBL" id="CP001184">
    <property type="protein sequence ID" value="ACI60352.1"/>
    <property type="molecule type" value="Genomic_DNA"/>
</dbReference>
<dbReference type="RefSeq" id="WP_012560352.1">
    <property type="nucleotide sequence ID" value="NC_011374.1"/>
</dbReference>
<dbReference type="SMR" id="B5ZBE2"/>
<dbReference type="STRING" id="565575.UUR10_0339"/>
<dbReference type="KEGG" id="uue:UUR10_0339"/>
<dbReference type="eggNOG" id="COG0572">
    <property type="taxonomic scope" value="Bacteria"/>
</dbReference>
<dbReference type="HOGENOM" id="CLU_021278_1_2_14"/>
<dbReference type="OrthoDB" id="9777642at2"/>
<dbReference type="UniPathway" id="UPA00574">
    <property type="reaction ID" value="UER00637"/>
</dbReference>
<dbReference type="UniPathway" id="UPA00579">
    <property type="reaction ID" value="UER00640"/>
</dbReference>
<dbReference type="Proteomes" id="UP000002018">
    <property type="component" value="Chromosome"/>
</dbReference>
<dbReference type="GO" id="GO:0005737">
    <property type="term" value="C:cytoplasm"/>
    <property type="evidence" value="ECO:0007669"/>
    <property type="project" value="UniProtKB-SubCell"/>
</dbReference>
<dbReference type="GO" id="GO:0005524">
    <property type="term" value="F:ATP binding"/>
    <property type="evidence" value="ECO:0007669"/>
    <property type="project" value="UniProtKB-UniRule"/>
</dbReference>
<dbReference type="GO" id="GO:0043771">
    <property type="term" value="F:cytidine kinase activity"/>
    <property type="evidence" value="ECO:0007669"/>
    <property type="project" value="RHEA"/>
</dbReference>
<dbReference type="GO" id="GO:0004849">
    <property type="term" value="F:uridine kinase activity"/>
    <property type="evidence" value="ECO:0007669"/>
    <property type="project" value="UniProtKB-UniRule"/>
</dbReference>
<dbReference type="GO" id="GO:0044211">
    <property type="term" value="P:CTP salvage"/>
    <property type="evidence" value="ECO:0007669"/>
    <property type="project" value="UniProtKB-UniRule"/>
</dbReference>
<dbReference type="GO" id="GO:0044206">
    <property type="term" value="P:UMP salvage"/>
    <property type="evidence" value="ECO:0007669"/>
    <property type="project" value="UniProtKB-UniRule"/>
</dbReference>
<dbReference type="CDD" id="cd02023">
    <property type="entry name" value="UMPK"/>
    <property type="match status" value="1"/>
</dbReference>
<dbReference type="Gene3D" id="3.40.50.300">
    <property type="entry name" value="P-loop containing nucleotide triphosphate hydrolases"/>
    <property type="match status" value="1"/>
</dbReference>
<dbReference type="HAMAP" id="MF_00551">
    <property type="entry name" value="Uridine_kinase"/>
    <property type="match status" value="1"/>
</dbReference>
<dbReference type="InterPro" id="IPR027417">
    <property type="entry name" value="P-loop_NTPase"/>
</dbReference>
<dbReference type="InterPro" id="IPR006083">
    <property type="entry name" value="PRK/URK"/>
</dbReference>
<dbReference type="InterPro" id="IPR026008">
    <property type="entry name" value="Uridine_kinase"/>
</dbReference>
<dbReference type="InterPro" id="IPR000764">
    <property type="entry name" value="Uridine_kinase-like"/>
</dbReference>
<dbReference type="NCBIfam" id="NF004018">
    <property type="entry name" value="PRK05480.1"/>
    <property type="match status" value="1"/>
</dbReference>
<dbReference type="NCBIfam" id="TIGR00235">
    <property type="entry name" value="udk"/>
    <property type="match status" value="1"/>
</dbReference>
<dbReference type="PANTHER" id="PTHR10285">
    <property type="entry name" value="URIDINE KINASE"/>
    <property type="match status" value="1"/>
</dbReference>
<dbReference type="Pfam" id="PF00485">
    <property type="entry name" value="PRK"/>
    <property type="match status" value="1"/>
</dbReference>
<dbReference type="PRINTS" id="PR00988">
    <property type="entry name" value="URIDINKINASE"/>
</dbReference>
<dbReference type="SUPFAM" id="SSF52540">
    <property type="entry name" value="P-loop containing nucleoside triphosphate hydrolases"/>
    <property type="match status" value="1"/>
</dbReference>
<comment type="catalytic activity">
    <reaction evidence="1">
        <text>uridine + ATP = UMP + ADP + H(+)</text>
        <dbReference type="Rhea" id="RHEA:16825"/>
        <dbReference type="ChEBI" id="CHEBI:15378"/>
        <dbReference type="ChEBI" id="CHEBI:16704"/>
        <dbReference type="ChEBI" id="CHEBI:30616"/>
        <dbReference type="ChEBI" id="CHEBI:57865"/>
        <dbReference type="ChEBI" id="CHEBI:456216"/>
        <dbReference type="EC" id="2.7.1.48"/>
    </reaction>
</comment>
<comment type="catalytic activity">
    <reaction evidence="1">
        <text>cytidine + ATP = CMP + ADP + H(+)</text>
        <dbReference type="Rhea" id="RHEA:24674"/>
        <dbReference type="ChEBI" id="CHEBI:15378"/>
        <dbReference type="ChEBI" id="CHEBI:17562"/>
        <dbReference type="ChEBI" id="CHEBI:30616"/>
        <dbReference type="ChEBI" id="CHEBI:60377"/>
        <dbReference type="ChEBI" id="CHEBI:456216"/>
        <dbReference type="EC" id="2.7.1.48"/>
    </reaction>
</comment>
<comment type="pathway">
    <text evidence="1">Pyrimidine metabolism; CTP biosynthesis via salvage pathway; CTP from cytidine: step 1/3.</text>
</comment>
<comment type="pathway">
    <text evidence="1">Pyrimidine metabolism; UMP biosynthesis via salvage pathway; UMP from uridine: step 1/1.</text>
</comment>
<comment type="subcellular location">
    <subcellularLocation>
        <location evidence="1">Cytoplasm</location>
    </subcellularLocation>
</comment>
<comment type="similarity">
    <text evidence="1">Belongs to the uridine kinase family.</text>
</comment>
<sequence>MNAKSPILVLIAGASGSGKTTFANEIVARIPQNTTSVIICQDSYYISNSQLNKNERRLINYDHPSSFEWDLMREQLSDIKKRKKIKVPIYDYKTEIRLDKTIDISDVDVIVFEGIYAIYDDVINQIADLKVFIETPKDECLIRRILRDVNERNRSFESVITQWRSTVSPMYDQFVEPSKKNANVSVLWNEHNRVALHLINKWINNIH</sequence>
<evidence type="ECO:0000255" key="1">
    <source>
        <dbReference type="HAMAP-Rule" id="MF_00551"/>
    </source>
</evidence>
<feature type="chain" id="PRO_1000129095" description="Uridine kinase">
    <location>
        <begin position="1"/>
        <end position="207"/>
    </location>
</feature>
<feature type="binding site" evidence="1">
    <location>
        <begin position="13"/>
        <end position="20"/>
    </location>
    <ligand>
        <name>ATP</name>
        <dbReference type="ChEBI" id="CHEBI:30616"/>
    </ligand>
</feature>
<keyword id="KW-0067">ATP-binding</keyword>
<keyword id="KW-0963">Cytoplasm</keyword>
<keyword id="KW-0418">Kinase</keyword>
<keyword id="KW-0547">Nucleotide-binding</keyword>
<keyword id="KW-0808">Transferase</keyword>